<dbReference type="GO" id="GO:0005576">
    <property type="term" value="C:extracellular region"/>
    <property type="evidence" value="ECO:0007669"/>
    <property type="project" value="UniProtKB-SubCell"/>
</dbReference>
<dbReference type="GO" id="GO:0007218">
    <property type="term" value="P:neuropeptide signaling pathway"/>
    <property type="evidence" value="ECO:0007669"/>
    <property type="project" value="UniProtKB-KW"/>
</dbReference>
<organism>
    <name type="scientific">Karoophasma biedouwense</name>
    <name type="common">Gladiator</name>
    <name type="synonym">Heel-walker</name>
    <dbReference type="NCBI Taxonomy" id="253133"/>
    <lineage>
        <taxon>Eukaryota</taxon>
        <taxon>Metazoa</taxon>
        <taxon>Ecdysozoa</taxon>
        <taxon>Arthropoda</taxon>
        <taxon>Hexapoda</taxon>
        <taxon>Insecta</taxon>
        <taxon>Pterygota</taxon>
        <taxon>Neoptera</taxon>
        <taxon>Polyneoptera</taxon>
        <taxon>Mantophasmatodea</taxon>
        <taxon>Austrophasmatidae</taxon>
        <taxon>Karoophasma</taxon>
    </lineage>
</organism>
<name>CORZ_KARBI</name>
<reference evidence="5" key="1">
    <citation type="journal article" date="2012" name="Syst. Biol.">
        <title>Peptidomics-based phylogeny and biogeography of Mantophasmatodea (Hexapoda).</title>
        <authorList>
            <person name="Predel R."/>
            <person name="Neupert S."/>
            <person name="Huetteroth W."/>
            <person name="Kahnt J."/>
            <person name="Waidelich D."/>
            <person name="Roth S."/>
        </authorList>
    </citation>
    <scope>PROTEIN SEQUENCE</scope>
    <scope>PYROGLUTAMATE FORMATION AT GLN-1</scope>
    <scope>AMIDATION AT ASN-11</scope>
    <source>
        <tissue evidence="3">Corpora cardiaca</tissue>
    </source>
</reference>
<accession>B3A077</accession>
<keyword id="KW-0027">Amidation</keyword>
<keyword id="KW-0903">Direct protein sequencing</keyword>
<keyword id="KW-0527">Neuropeptide</keyword>
<keyword id="KW-0873">Pyrrolidone carboxylic acid</keyword>
<keyword id="KW-0964">Secreted</keyword>
<protein>
    <recommendedName>
        <fullName evidence="4">Corazonin</fullName>
    </recommendedName>
</protein>
<sequence>QTFHYSQGWTN</sequence>
<feature type="peptide" id="PRO_0000421704" description="Corazonin" evidence="3">
    <location>
        <begin position="1"/>
        <end position="11"/>
    </location>
</feature>
<feature type="modified residue" description="Pyrrolidone carboxylic acid" evidence="3">
    <location>
        <position position="1"/>
    </location>
</feature>
<feature type="modified residue" description="Asparagine amide" evidence="3">
    <location>
        <position position="11"/>
    </location>
</feature>
<proteinExistence type="evidence at protein level"/>
<evidence type="ECO:0000250" key="1">
    <source>
        <dbReference type="UniProtKB" id="Q26377"/>
    </source>
</evidence>
<evidence type="ECO:0000255" key="2"/>
<evidence type="ECO:0000269" key="3">
    <source>
    </source>
</evidence>
<evidence type="ECO:0000303" key="4">
    <source>
    </source>
</evidence>
<evidence type="ECO:0000305" key="5"/>
<evidence type="ECO:0000305" key="6">
    <source>
    </source>
</evidence>
<comment type="function">
    <text evidence="1">Cardioactive peptide. Corazonin is probably involved in the physiological regulation of the heart beat (By similarity).</text>
</comment>
<comment type="subcellular location">
    <subcellularLocation>
        <location evidence="6">Secreted</location>
    </subcellularLocation>
</comment>
<comment type="similarity">
    <text evidence="2">Belongs to the corazonin family.</text>
</comment>